<keyword id="KW-0963">Cytoplasm</keyword>
<keyword id="KW-0489">Methyltransferase</keyword>
<keyword id="KW-1185">Reference proteome</keyword>
<keyword id="KW-0698">rRNA processing</keyword>
<keyword id="KW-0949">S-adenosyl-L-methionine</keyword>
<keyword id="KW-0808">Transferase</keyword>
<dbReference type="EC" id="2.1.1.199" evidence="1"/>
<dbReference type="EMBL" id="CP000699">
    <property type="protein sequence ID" value="ABQ70300.1"/>
    <property type="molecule type" value="Genomic_DNA"/>
</dbReference>
<dbReference type="SMR" id="A5VDD4"/>
<dbReference type="STRING" id="392499.Swit_3955"/>
<dbReference type="PaxDb" id="392499-Swit_3955"/>
<dbReference type="KEGG" id="swi:Swit_3955"/>
<dbReference type="eggNOG" id="COG0275">
    <property type="taxonomic scope" value="Bacteria"/>
</dbReference>
<dbReference type="HOGENOM" id="CLU_038422_1_1_5"/>
<dbReference type="OrthoDB" id="9806637at2"/>
<dbReference type="Proteomes" id="UP000001989">
    <property type="component" value="Chromosome"/>
</dbReference>
<dbReference type="GO" id="GO:0005737">
    <property type="term" value="C:cytoplasm"/>
    <property type="evidence" value="ECO:0007669"/>
    <property type="project" value="UniProtKB-SubCell"/>
</dbReference>
<dbReference type="GO" id="GO:0071424">
    <property type="term" value="F:rRNA (cytosine-N4-)-methyltransferase activity"/>
    <property type="evidence" value="ECO:0007669"/>
    <property type="project" value="UniProtKB-UniRule"/>
</dbReference>
<dbReference type="GO" id="GO:0070475">
    <property type="term" value="P:rRNA base methylation"/>
    <property type="evidence" value="ECO:0007669"/>
    <property type="project" value="UniProtKB-UniRule"/>
</dbReference>
<dbReference type="Gene3D" id="1.10.150.170">
    <property type="entry name" value="Putative methyltransferase TM0872, insert domain"/>
    <property type="match status" value="1"/>
</dbReference>
<dbReference type="Gene3D" id="3.40.50.150">
    <property type="entry name" value="Vaccinia Virus protein VP39"/>
    <property type="match status" value="1"/>
</dbReference>
<dbReference type="HAMAP" id="MF_01007">
    <property type="entry name" value="16SrRNA_methyltr_H"/>
    <property type="match status" value="1"/>
</dbReference>
<dbReference type="InterPro" id="IPR002903">
    <property type="entry name" value="RsmH"/>
</dbReference>
<dbReference type="InterPro" id="IPR023397">
    <property type="entry name" value="SAM-dep_MeTrfase_MraW_recog"/>
</dbReference>
<dbReference type="InterPro" id="IPR029063">
    <property type="entry name" value="SAM-dependent_MTases_sf"/>
</dbReference>
<dbReference type="NCBIfam" id="TIGR00006">
    <property type="entry name" value="16S rRNA (cytosine(1402)-N(4))-methyltransferase RsmH"/>
    <property type="match status" value="1"/>
</dbReference>
<dbReference type="PANTHER" id="PTHR11265:SF0">
    <property type="entry name" value="12S RRNA N4-METHYLCYTIDINE METHYLTRANSFERASE"/>
    <property type="match status" value="1"/>
</dbReference>
<dbReference type="PANTHER" id="PTHR11265">
    <property type="entry name" value="S-ADENOSYL-METHYLTRANSFERASE MRAW"/>
    <property type="match status" value="1"/>
</dbReference>
<dbReference type="Pfam" id="PF01795">
    <property type="entry name" value="Methyltransf_5"/>
    <property type="match status" value="1"/>
</dbReference>
<dbReference type="PIRSF" id="PIRSF004486">
    <property type="entry name" value="MraW"/>
    <property type="match status" value="1"/>
</dbReference>
<dbReference type="SUPFAM" id="SSF81799">
    <property type="entry name" value="Putative methyltransferase TM0872, insert domain"/>
    <property type="match status" value="1"/>
</dbReference>
<dbReference type="SUPFAM" id="SSF53335">
    <property type="entry name" value="S-adenosyl-L-methionine-dependent methyltransferases"/>
    <property type="match status" value="1"/>
</dbReference>
<protein>
    <recommendedName>
        <fullName evidence="1">Ribosomal RNA small subunit methyltransferase H</fullName>
        <ecNumber evidence="1">2.1.1.199</ecNumber>
    </recommendedName>
    <alternativeName>
        <fullName evidence="1">16S rRNA m(4)C1402 methyltransferase</fullName>
    </alternativeName>
    <alternativeName>
        <fullName evidence="1">rRNA (cytosine-N(4)-)-methyltransferase RsmH</fullName>
    </alternativeName>
</protein>
<reference key="1">
    <citation type="journal article" date="2010" name="J. Bacteriol.">
        <title>Genome sequence of the dioxin-mineralizing bacterium Sphingomonas wittichii RW1.</title>
        <authorList>
            <person name="Miller T.R."/>
            <person name="Delcher A.L."/>
            <person name="Salzberg S.L."/>
            <person name="Saunders E."/>
            <person name="Detter J.C."/>
            <person name="Halden R.U."/>
        </authorList>
    </citation>
    <scope>NUCLEOTIDE SEQUENCE [LARGE SCALE GENOMIC DNA]</scope>
    <source>
        <strain>DSM 6014 / CCUG 31198 / JCM 15750 / NBRC 105917 / EY 4224 / RW1</strain>
    </source>
</reference>
<comment type="function">
    <text evidence="1">Specifically methylates the N4 position of cytidine in position 1402 (C1402) of 16S rRNA.</text>
</comment>
<comment type="catalytic activity">
    <reaction evidence="1">
        <text>cytidine(1402) in 16S rRNA + S-adenosyl-L-methionine = N(4)-methylcytidine(1402) in 16S rRNA + S-adenosyl-L-homocysteine + H(+)</text>
        <dbReference type="Rhea" id="RHEA:42928"/>
        <dbReference type="Rhea" id="RHEA-COMP:10286"/>
        <dbReference type="Rhea" id="RHEA-COMP:10287"/>
        <dbReference type="ChEBI" id="CHEBI:15378"/>
        <dbReference type="ChEBI" id="CHEBI:57856"/>
        <dbReference type="ChEBI" id="CHEBI:59789"/>
        <dbReference type="ChEBI" id="CHEBI:74506"/>
        <dbReference type="ChEBI" id="CHEBI:82748"/>
        <dbReference type="EC" id="2.1.1.199"/>
    </reaction>
</comment>
<comment type="subcellular location">
    <subcellularLocation>
        <location evidence="1">Cytoplasm</location>
    </subcellularLocation>
</comment>
<comment type="similarity">
    <text evidence="1">Belongs to the methyltransferase superfamily. RsmH family.</text>
</comment>
<name>RSMH_RHIWR</name>
<gene>
    <name evidence="1" type="primary">rsmH</name>
    <name type="synonym">mraW</name>
    <name type="ordered locus">Swit_3955</name>
</gene>
<feature type="chain" id="PRO_0000387132" description="Ribosomal RNA small subunit methyltransferase H">
    <location>
        <begin position="1"/>
        <end position="322"/>
    </location>
</feature>
<feature type="region of interest" description="Disordered" evidence="2">
    <location>
        <begin position="254"/>
        <end position="322"/>
    </location>
</feature>
<feature type="compositionally biased region" description="Low complexity" evidence="2">
    <location>
        <begin position="295"/>
        <end position="309"/>
    </location>
</feature>
<feature type="binding site" evidence="1">
    <location>
        <begin position="35"/>
        <end position="37"/>
    </location>
    <ligand>
        <name>S-adenosyl-L-methionine</name>
        <dbReference type="ChEBI" id="CHEBI:59789"/>
    </ligand>
</feature>
<feature type="binding site" evidence="1">
    <location>
        <position position="52"/>
    </location>
    <ligand>
        <name>S-adenosyl-L-methionine</name>
        <dbReference type="ChEBI" id="CHEBI:59789"/>
    </ligand>
</feature>
<feature type="binding site" evidence="1">
    <location>
        <position position="79"/>
    </location>
    <ligand>
        <name>S-adenosyl-L-methionine</name>
        <dbReference type="ChEBI" id="CHEBI:59789"/>
    </ligand>
</feature>
<feature type="binding site" evidence="1">
    <location>
        <position position="100"/>
    </location>
    <ligand>
        <name>S-adenosyl-L-methionine</name>
        <dbReference type="ChEBI" id="CHEBI:59789"/>
    </ligand>
</feature>
<feature type="binding site" evidence="1">
    <location>
        <position position="107"/>
    </location>
    <ligand>
        <name>S-adenosyl-L-methionine</name>
        <dbReference type="ChEBI" id="CHEBI:59789"/>
    </ligand>
</feature>
<accession>A5VDD4</accession>
<proteinExistence type="inferred from homology"/>
<sequence>MTTTAPHVPVLIDEVIAGLEPATGETHVDGTFGAGGYTRALLQAGARVYAFDRDPDAIAEGRALEDGQDGRLILVPERFSRMAEALNERGIDQVDGVTLDIGVSSMQLDRADRGFSFQADGPLDMRMEKSGMSAADFVNTADEAEIADVLHDLGEEPRARRVARAIVQARPITRTSELAEVVRRALGHKPHEKKDPATRTFQAIRIHLNAELDELEQGLAAAERVLRPGGRLAVVSFHSIEDRIVKRFLRDRSGATPAGSRHLPDARAGGPRPSFEAVAKPVRAGEAELARNPRSRSATLRVARRTAAAPWGTAPKKEGRQG</sequence>
<evidence type="ECO:0000255" key="1">
    <source>
        <dbReference type="HAMAP-Rule" id="MF_01007"/>
    </source>
</evidence>
<evidence type="ECO:0000256" key="2">
    <source>
        <dbReference type="SAM" id="MobiDB-lite"/>
    </source>
</evidence>
<organism>
    <name type="scientific">Rhizorhabdus wittichii (strain DSM 6014 / CCUG 31198 / JCM 15750 / NBRC 105917 / EY 4224 / RW1)</name>
    <name type="common">Sphingomonas wittichii</name>
    <dbReference type="NCBI Taxonomy" id="392499"/>
    <lineage>
        <taxon>Bacteria</taxon>
        <taxon>Pseudomonadati</taxon>
        <taxon>Pseudomonadota</taxon>
        <taxon>Alphaproteobacteria</taxon>
        <taxon>Sphingomonadales</taxon>
        <taxon>Sphingomonadaceae</taxon>
        <taxon>Rhizorhabdus</taxon>
    </lineage>
</organism>